<feature type="chain" id="PRO_1000188485" description="Nucleoside triphosphatase NudI">
    <location>
        <begin position="1"/>
        <end position="141"/>
    </location>
</feature>
<feature type="domain" description="Nudix hydrolase" evidence="1">
    <location>
        <begin position="1"/>
        <end position="141"/>
    </location>
</feature>
<feature type="short sequence motif" description="Nudix box">
    <location>
        <begin position="38"/>
        <end position="59"/>
    </location>
</feature>
<reference key="1">
    <citation type="journal article" date="2008" name="PLoS Genet.">
        <title>Complete genome sequence of the N2-fixing broad host range endophyte Klebsiella pneumoniae 342 and virulence predictions verified in mice.</title>
        <authorList>
            <person name="Fouts D.E."/>
            <person name="Tyler H.L."/>
            <person name="DeBoy R.T."/>
            <person name="Daugherty S."/>
            <person name="Ren Q."/>
            <person name="Badger J.H."/>
            <person name="Durkin A.S."/>
            <person name="Huot H."/>
            <person name="Shrivastava S."/>
            <person name="Kothari S."/>
            <person name="Dodson R.J."/>
            <person name="Mohamoud Y."/>
            <person name="Khouri H."/>
            <person name="Roesch L.F.W."/>
            <person name="Krogfelt K.A."/>
            <person name="Struve C."/>
            <person name="Triplett E.W."/>
            <person name="Methe B.A."/>
        </authorList>
    </citation>
    <scope>NUCLEOTIDE SEQUENCE [LARGE SCALE GENOMIC DNA]</scope>
    <source>
        <strain>342</strain>
    </source>
</reference>
<sequence length="141" mass="16281">MRQRTIVCPLIQNEGHYLLCKMAADRGVFPGQWALSGGGVEPVERIEEALRREIREELGEKLILTHIAPWSFRDDTRVKTYPDGRQETIYMIYLIFDCVSANRDVTINEEFDDYAWVKAEDLKNYDLNAATRVTLSQKGLL</sequence>
<comment type="function">
    <text evidence="1">Catalyzes the hydrolysis of nucleoside triphosphates, with a preference for pyrimidine deoxynucleoside triphosphates (dUTP, dTTP and dCTP).</text>
</comment>
<comment type="catalytic activity">
    <reaction evidence="1">
        <text>a ribonucleoside 5'-triphosphate + H2O = a ribonucleoside 5'-phosphate + diphosphate + H(+)</text>
        <dbReference type="Rhea" id="RHEA:23996"/>
        <dbReference type="ChEBI" id="CHEBI:15377"/>
        <dbReference type="ChEBI" id="CHEBI:15378"/>
        <dbReference type="ChEBI" id="CHEBI:33019"/>
        <dbReference type="ChEBI" id="CHEBI:58043"/>
        <dbReference type="ChEBI" id="CHEBI:61557"/>
        <dbReference type="EC" id="3.6.1.9"/>
    </reaction>
</comment>
<comment type="catalytic activity">
    <reaction evidence="1">
        <text>a 2'-deoxyribonucleoside 5'-triphosphate + H2O = a 2'-deoxyribonucleoside 5'-phosphate + diphosphate + H(+)</text>
        <dbReference type="Rhea" id="RHEA:44644"/>
        <dbReference type="ChEBI" id="CHEBI:15377"/>
        <dbReference type="ChEBI" id="CHEBI:15378"/>
        <dbReference type="ChEBI" id="CHEBI:33019"/>
        <dbReference type="ChEBI" id="CHEBI:61560"/>
        <dbReference type="ChEBI" id="CHEBI:65317"/>
        <dbReference type="EC" id="3.6.1.9"/>
    </reaction>
</comment>
<comment type="catalytic activity">
    <reaction evidence="1">
        <text>dUTP + H2O = dUMP + diphosphate + H(+)</text>
        <dbReference type="Rhea" id="RHEA:10248"/>
        <dbReference type="ChEBI" id="CHEBI:15377"/>
        <dbReference type="ChEBI" id="CHEBI:15378"/>
        <dbReference type="ChEBI" id="CHEBI:33019"/>
        <dbReference type="ChEBI" id="CHEBI:61555"/>
        <dbReference type="ChEBI" id="CHEBI:246422"/>
        <dbReference type="EC" id="3.6.1.9"/>
    </reaction>
</comment>
<comment type="catalytic activity">
    <reaction evidence="1">
        <text>dUTP + H2O = dUMP + diphosphate + H(+)</text>
        <dbReference type="Rhea" id="RHEA:10248"/>
        <dbReference type="ChEBI" id="CHEBI:15377"/>
        <dbReference type="ChEBI" id="CHEBI:15378"/>
        <dbReference type="ChEBI" id="CHEBI:33019"/>
        <dbReference type="ChEBI" id="CHEBI:61555"/>
        <dbReference type="ChEBI" id="CHEBI:246422"/>
        <dbReference type="EC" id="3.6.1.23"/>
    </reaction>
</comment>
<comment type="catalytic activity">
    <reaction evidence="1">
        <text>dTTP + H2O = dTMP + diphosphate + H(+)</text>
        <dbReference type="Rhea" id="RHEA:28534"/>
        <dbReference type="ChEBI" id="CHEBI:15377"/>
        <dbReference type="ChEBI" id="CHEBI:15378"/>
        <dbReference type="ChEBI" id="CHEBI:33019"/>
        <dbReference type="ChEBI" id="CHEBI:37568"/>
        <dbReference type="ChEBI" id="CHEBI:63528"/>
        <dbReference type="EC" id="3.6.1.9"/>
    </reaction>
</comment>
<comment type="catalytic activity">
    <reaction evidence="1">
        <text>dCTP + H2O = dCMP + diphosphate + H(+)</text>
        <dbReference type="Rhea" id="RHEA:22636"/>
        <dbReference type="ChEBI" id="CHEBI:15377"/>
        <dbReference type="ChEBI" id="CHEBI:15378"/>
        <dbReference type="ChEBI" id="CHEBI:33019"/>
        <dbReference type="ChEBI" id="CHEBI:57566"/>
        <dbReference type="ChEBI" id="CHEBI:61481"/>
        <dbReference type="EC" id="3.6.1.9"/>
    </reaction>
</comment>
<comment type="catalytic activity">
    <reaction evidence="1">
        <text>dCTP + H2O = dCMP + diphosphate + H(+)</text>
        <dbReference type="Rhea" id="RHEA:22636"/>
        <dbReference type="ChEBI" id="CHEBI:15377"/>
        <dbReference type="ChEBI" id="CHEBI:15378"/>
        <dbReference type="ChEBI" id="CHEBI:33019"/>
        <dbReference type="ChEBI" id="CHEBI:57566"/>
        <dbReference type="ChEBI" id="CHEBI:61481"/>
        <dbReference type="EC" id="3.6.1.12"/>
    </reaction>
</comment>
<comment type="cofactor">
    <cofactor evidence="1">
        <name>Mg(2+)</name>
        <dbReference type="ChEBI" id="CHEBI:18420"/>
    </cofactor>
</comment>
<comment type="subunit">
    <text evidence="1">Monomer.</text>
</comment>
<comment type="similarity">
    <text evidence="1">Belongs to the Nudix hydrolase family. NudI subfamily.</text>
</comment>
<dbReference type="EC" id="3.6.1.9" evidence="1"/>
<dbReference type="EC" id="3.6.1.12" evidence="1"/>
<dbReference type="EC" id="3.6.1.-" evidence="1"/>
<dbReference type="EC" id="3.6.1.23" evidence="1"/>
<dbReference type="EMBL" id="CP000964">
    <property type="protein sequence ID" value="ACI11376.1"/>
    <property type="molecule type" value="Genomic_DNA"/>
</dbReference>
<dbReference type="SMR" id="B5XNX5"/>
<dbReference type="KEGG" id="kpe:KPK_1492"/>
<dbReference type="HOGENOM" id="CLU_037162_31_0_6"/>
<dbReference type="Proteomes" id="UP000001734">
    <property type="component" value="Chromosome"/>
</dbReference>
<dbReference type="GO" id="GO:0047840">
    <property type="term" value="F:dCTP diphosphatase activity"/>
    <property type="evidence" value="ECO:0007669"/>
    <property type="project" value="UniProtKB-EC"/>
</dbReference>
<dbReference type="GO" id="GO:0036218">
    <property type="term" value="F:dTTP diphosphatase activity"/>
    <property type="evidence" value="ECO:0007669"/>
    <property type="project" value="RHEA"/>
</dbReference>
<dbReference type="GO" id="GO:0004170">
    <property type="term" value="F:dUTP diphosphatase activity"/>
    <property type="evidence" value="ECO:0007669"/>
    <property type="project" value="UniProtKB-EC"/>
</dbReference>
<dbReference type="GO" id="GO:0000287">
    <property type="term" value="F:magnesium ion binding"/>
    <property type="evidence" value="ECO:0007669"/>
    <property type="project" value="UniProtKB-UniRule"/>
</dbReference>
<dbReference type="CDD" id="cd04696">
    <property type="entry name" value="NUDIX_NudI"/>
    <property type="match status" value="1"/>
</dbReference>
<dbReference type="Gene3D" id="3.90.79.10">
    <property type="entry name" value="Nucleoside Triphosphate Pyrophosphohydrolase"/>
    <property type="match status" value="1"/>
</dbReference>
<dbReference type="HAMAP" id="MF_01846">
    <property type="entry name" value="Nudix_NudI"/>
    <property type="match status" value="1"/>
</dbReference>
<dbReference type="InterPro" id="IPR023781">
    <property type="entry name" value="Nucleoside_triphosphatase_NudI"/>
</dbReference>
<dbReference type="InterPro" id="IPR015797">
    <property type="entry name" value="NUDIX_hydrolase-like_dom_sf"/>
</dbReference>
<dbReference type="InterPro" id="IPR020084">
    <property type="entry name" value="NUDIX_hydrolase_CS"/>
</dbReference>
<dbReference type="InterPro" id="IPR000086">
    <property type="entry name" value="NUDIX_hydrolase_dom"/>
</dbReference>
<dbReference type="NCBIfam" id="NF012016">
    <property type="entry name" value="PRK15472.1"/>
    <property type="match status" value="1"/>
</dbReference>
<dbReference type="PANTHER" id="PTHR43046">
    <property type="entry name" value="GDP-MANNOSE MANNOSYL HYDROLASE"/>
    <property type="match status" value="1"/>
</dbReference>
<dbReference type="PANTHER" id="PTHR43046:SF14">
    <property type="entry name" value="MUTT_NUDIX FAMILY PROTEIN"/>
    <property type="match status" value="1"/>
</dbReference>
<dbReference type="Pfam" id="PF00293">
    <property type="entry name" value="NUDIX"/>
    <property type="match status" value="1"/>
</dbReference>
<dbReference type="SUPFAM" id="SSF55811">
    <property type="entry name" value="Nudix"/>
    <property type="match status" value="1"/>
</dbReference>
<dbReference type="PROSITE" id="PS51462">
    <property type="entry name" value="NUDIX"/>
    <property type="match status" value="1"/>
</dbReference>
<dbReference type="PROSITE" id="PS00893">
    <property type="entry name" value="NUDIX_BOX"/>
    <property type="match status" value="1"/>
</dbReference>
<gene>
    <name evidence="1" type="primary">nudI</name>
    <name type="ordered locus">KPK_1492</name>
</gene>
<protein>
    <recommendedName>
        <fullName evidence="1">Nucleoside triphosphatase NudI</fullName>
        <ecNumber evidence="1">3.6.1.9</ecNumber>
    </recommendedName>
    <alternativeName>
        <fullName evidence="1">Nucleotide diphosphatase NudI</fullName>
    </alternativeName>
    <alternativeName>
        <fullName evidence="1">Pyrimidine deoxynucleoside triphosphate diphosphatase</fullName>
    </alternativeName>
    <alternativeName>
        <fullName evidence="1">dCTP diphosphatase</fullName>
        <ecNumber evidence="1">3.6.1.12</ecNumber>
    </alternativeName>
    <alternativeName>
        <fullName evidence="1">dTTP diphosphatase</fullName>
        <ecNumber evidence="1">3.6.1.-</ecNumber>
    </alternativeName>
    <alternativeName>
        <fullName evidence="1">dUTP diphosphatase</fullName>
        <ecNumber evidence="1">3.6.1.23</ecNumber>
    </alternativeName>
</protein>
<accession>B5XNX5</accession>
<proteinExistence type="inferred from homology"/>
<evidence type="ECO:0000255" key="1">
    <source>
        <dbReference type="HAMAP-Rule" id="MF_01846"/>
    </source>
</evidence>
<name>NUDI_KLEP3</name>
<keyword id="KW-0378">Hydrolase</keyword>
<keyword id="KW-0460">Magnesium</keyword>
<organism>
    <name type="scientific">Klebsiella pneumoniae (strain 342)</name>
    <dbReference type="NCBI Taxonomy" id="507522"/>
    <lineage>
        <taxon>Bacteria</taxon>
        <taxon>Pseudomonadati</taxon>
        <taxon>Pseudomonadota</taxon>
        <taxon>Gammaproteobacteria</taxon>
        <taxon>Enterobacterales</taxon>
        <taxon>Enterobacteriaceae</taxon>
        <taxon>Klebsiella/Raoultella group</taxon>
        <taxon>Klebsiella</taxon>
        <taxon>Klebsiella pneumoniae complex</taxon>
    </lineage>
</organism>